<gene>
    <name evidence="5" type="primary">TZF6</name>
    <name evidence="9" type="synonym">PEI1</name>
    <name evidence="8" type="ordered locus">At5g07500</name>
    <name evidence="10" type="ORF">T2I1.210</name>
</gene>
<comment type="function">
    <text evidence="4">Embryo-specific transcription factor required at the globular to heart stage transition in embryo development.</text>
</comment>
<comment type="subunit">
    <text evidence="3">Interacts with MARD1/FLZ9 and RD21A.</text>
</comment>
<comment type="subcellular location">
    <subcellularLocation>
        <location evidence="7">Nucleus</location>
    </subcellularLocation>
</comment>
<comment type="tissue specificity">
    <text evidence="4">Specifically expressed in embryo (at protein level).</text>
</comment>
<comment type="miscellaneous">
    <text>Plants lacking PEI1 produce white seeds in which embryo development does not progress through heart stage.</text>
</comment>
<comment type="sequence caution" evidence="6">
    <conflict type="erroneous termination">
        <sequence resource="EMBL-CDS" id="ABK28686"/>
    </conflict>
    <text>Extended C-terminus.</text>
</comment>
<organism>
    <name type="scientific">Arabidopsis thaliana</name>
    <name type="common">Mouse-ear cress</name>
    <dbReference type="NCBI Taxonomy" id="3702"/>
    <lineage>
        <taxon>Eukaryota</taxon>
        <taxon>Viridiplantae</taxon>
        <taxon>Streptophyta</taxon>
        <taxon>Embryophyta</taxon>
        <taxon>Tracheophyta</taxon>
        <taxon>Spermatophyta</taxon>
        <taxon>Magnoliopsida</taxon>
        <taxon>eudicotyledons</taxon>
        <taxon>Gunneridae</taxon>
        <taxon>Pentapetalae</taxon>
        <taxon>rosids</taxon>
        <taxon>malvids</taxon>
        <taxon>Brassicales</taxon>
        <taxon>Brassicaceae</taxon>
        <taxon>Camelineae</taxon>
        <taxon>Arabidopsis</taxon>
    </lineage>
</organism>
<sequence>MLKSASPMAFYDIGEQQYSTFGYILSKPGNAGAYEIDPSIPNIDDAIYGSDEFRMYAYKIKRCPRTRSHDWTECPYAHRGEKATRRDPRRYTYCAVACPAFRNGACHRGDSCEFAHGVFEYWLHPARYRTRACNAGNLCQRKVCFFAHAPEQLRQSEGKHRCRYAYRPVRARGGGNGDGVTMRMDDEGYDTSRSPVRSGKDDLDSNEEKVLLKCWSRMSIVDDHYEPSDLDLDLSHFDWISELVD</sequence>
<evidence type="ECO:0000255" key="1">
    <source>
        <dbReference type="PROSITE-ProRule" id="PRU00723"/>
    </source>
</evidence>
<evidence type="ECO:0000256" key="2">
    <source>
        <dbReference type="SAM" id="MobiDB-lite"/>
    </source>
</evidence>
<evidence type="ECO:0000269" key="3">
    <source>
    </source>
</evidence>
<evidence type="ECO:0000269" key="4">
    <source>
    </source>
</evidence>
<evidence type="ECO:0000303" key="5">
    <source>
    </source>
</evidence>
<evidence type="ECO:0000305" key="6"/>
<evidence type="ECO:0000305" key="7">
    <source>
    </source>
</evidence>
<evidence type="ECO:0000312" key="8">
    <source>
        <dbReference type="Araport" id="AT5G07500"/>
    </source>
</evidence>
<evidence type="ECO:0000312" key="9">
    <source>
        <dbReference type="EMBL" id="AAC05744.1"/>
    </source>
</evidence>
<evidence type="ECO:0000312" key="10">
    <source>
        <dbReference type="EMBL" id="CAB87939.1"/>
    </source>
</evidence>
<reference key="1">
    <citation type="journal article" date="1998" name="Plant Cell">
        <title>PEI1, an embryo-specific zinc finger protein gene required for heart-stage embryo formation in Arabidopsis.</title>
        <authorList>
            <person name="Li Z."/>
            <person name="Thomas T.L."/>
        </authorList>
    </citation>
    <scope>NUCLEOTIDE SEQUENCE [MRNA]</scope>
    <scope>FUNCTION</scope>
    <scope>SUBCELLULAR LOCATION</scope>
    <scope>TISSUE SPECIFICITY</scope>
</reference>
<reference key="2">
    <citation type="journal article" date="2000" name="Nature">
        <title>Sequence and analysis of chromosome 5 of the plant Arabidopsis thaliana.</title>
        <authorList>
            <person name="Tabata S."/>
            <person name="Kaneko T."/>
            <person name="Nakamura Y."/>
            <person name="Kotani H."/>
            <person name="Kato T."/>
            <person name="Asamizu E."/>
            <person name="Miyajima N."/>
            <person name="Sasamoto S."/>
            <person name="Kimura T."/>
            <person name="Hosouchi T."/>
            <person name="Kawashima K."/>
            <person name="Kohara M."/>
            <person name="Matsumoto M."/>
            <person name="Matsuno A."/>
            <person name="Muraki A."/>
            <person name="Nakayama S."/>
            <person name="Nakazaki N."/>
            <person name="Naruo K."/>
            <person name="Okumura S."/>
            <person name="Shinpo S."/>
            <person name="Takeuchi C."/>
            <person name="Wada T."/>
            <person name="Watanabe A."/>
            <person name="Yamada M."/>
            <person name="Yasuda M."/>
            <person name="Sato S."/>
            <person name="de la Bastide M."/>
            <person name="Huang E."/>
            <person name="Spiegel L."/>
            <person name="Gnoj L."/>
            <person name="O'Shaughnessy A."/>
            <person name="Preston R."/>
            <person name="Habermann K."/>
            <person name="Murray J."/>
            <person name="Johnson D."/>
            <person name="Rohlfing T."/>
            <person name="Nelson J."/>
            <person name="Stoneking T."/>
            <person name="Pepin K."/>
            <person name="Spieth J."/>
            <person name="Sekhon M."/>
            <person name="Armstrong J."/>
            <person name="Becker M."/>
            <person name="Belter E."/>
            <person name="Cordum H."/>
            <person name="Cordes M."/>
            <person name="Courtney L."/>
            <person name="Courtney W."/>
            <person name="Dante M."/>
            <person name="Du H."/>
            <person name="Edwards J."/>
            <person name="Fryman J."/>
            <person name="Haakensen B."/>
            <person name="Lamar E."/>
            <person name="Latreille P."/>
            <person name="Leonard S."/>
            <person name="Meyer R."/>
            <person name="Mulvaney E."/>
            <person name="Ozersky P."/>
            <person name="Riley A."/>
            <person name="Strowmatt C."/>
            <person name="Wagner-McPherson C."/>
            <person name="Wollam A."/>
            <person name="Yoakum M."/>
            <person name="Bell M."/>
            <person name="Dedhia N."/>
            <person name="Parnell L."/>
            <person name="Shah R."/>
            <person name="Rodriguez M."/>
            <person name="Hoon See L."/>
            <person name="Vil D."/>
            <person name="Baker J."/>
            <person name="Kirchoff K."/>
            <person name="Toth K."/>
            <person name="King L."/>
            <person name="Bahret A."/>
            <person name="Miller B."/>
            <person name="Marra M.A."/>
            <person name="Martienssen R."/>
            <person name="McCombie W.R."/>
            <person name="Wilson R.K."/>
            <person name="Murphy G."/>
            <person name="Bancroft I."/>
            <person name="Volckaert G."/>
            <person name="Wambutt R."/>
            <person name="Duesterhoeft A."/>
            <person name="Stiekema W."/>
            <person name="Pohl T."/>
            <person name="Entian K.-D."/>
            <person name="Terryn N."/>
            <person name="Hartley N."/>
            <person name="Bent E."/>
            <person name="Johnson S."/>
            <person name="Langham S.-A."/>
            <person name="McCullagh B."/>
            <person name="Robben J."/>
            <person name="Grymonprez B."/>
            <person name="Zimmermann W."/>
            <person name="Ramsperger U."/>
            <person name="Wedler H."/>
            <person name="Balke K."/>
            <person name="Wedler E."/>
            <person name="Peters S."/>
            <person name="van Staveren M."/>
            <person name="Dirkse W."/>
            <person name="Mooijman P."/>
            <person name="Klein Lankhorst R."/>
            <person name="Weitzenegger T."/>
            <person name="Bothe G."/>
            <person name="Rose M."/>
            <person name="Hauf J."/>
            <person name="Berneiser S."/>
            <person name="Hempel S."/>
            <person name="Feldpausch M."/>
            <person name="Lamberth S."/>
            <person name="Villarroel R."/>
            <person name="Gielen J."/>
            <person name="Ardiles W."/>
            <person name="Bents O."/>
            <person name="Lemcke K."/>
            <person name="Kolesov G."/>
            <person name="Mayer K.F.X."/>
            <person name="Rudd S."/>
            <person name="Schoof H."/>
            <person name="Schueller C."/>
            <person name="Zaccaria P."/>
            <person name="Mewes H.-W."/>
            <person name="Bevan M."/>
            <person name="Fransz P.F."/>
        </authorList>
    </citation>
    <scope>NUCLEOTIDE SEQUENCE [LARGE SCALE GENOMIC DNA]</scope>
    <source>
        <strain>cv. Columbia</strain>
    </source>
</reference>
<reference key="3">
    <citation type="journal article" date="2017" name="Plant J.">
        <title>Araport11: a complete reannotation of the Arabidopsis thaliana reference genome.</title>
        <authorList>
            <person name="Cheng C.Y."/>
            <person name="Krishnakumar V."/>
            <person name="Chan A.P."/>
            <person name="Thibaud-Nissen F."/>
            <person name="Schobel S."/>
            <person name="Town C.D."/>
        </authorList>
    </citation>
    <scope>GENOME REANNOTATION</scope>
    <source>
        <strain>cv. Columbia</strain>
    </source>
</reference>
<reference key="4">
    <citation type="journal article" date="2006" name="Plant Biotechnol. J.">
        <title>Simultaneous high-throughput recombinational cloning of open reading frames in closed and open configurations.</title>
        <authorList>
            <person name="Underwood B.A."/>
            <person name="Vanderhaeghen R."/>
            <person name="Whitford R."/>
            <person name="Town C.D."/>
            <person name="Hilson P."/>
        </authorList>
    </citation>
    <scope>NUCLEOTIDE SEQUENCE [LARGE SCALE MRNA]</scope>
    <source>
        <strain>cv. Columbia</strain>
    </source>
</reference>
<reference key="5">
    <citation type="journal article" date="2008" name="BMC Genomics">
        <title>Genome-wide analysis of CCCH zinc finger family in Arabidopsis and rice.</title>
        <authorList>
            <person name="Wang D."/>
            <person name="Guo Y."/>
            <person name="Wu C."/>
            <person name="Yang G."/>
            <person name="Li Y."/>
            <person name="Zheng C."/>
        </authorList>
    </citation>
    <scope>NOMENCLATURE</scope>
</reference>
<reference key="6">
    <citation type="journal article" date="2016" name="PLoS ONE">
        <title>Plant tandem CCCH zinc finger proteins interact with ABA, drought, and stress response regulators in processing-bodies and stress granules.</title>
        <authorList>
            <person name="Bogamuwa S."/>
            <person name="Jang J.C."/>
        </authorList>
    </citation>
    <scope>INTERACTION WITH MARD1 AND RD21A</scope>
</reference>
<protein>
    <recommendedName>
        <fullName>Zinc finger CCCH domain-containing protein 54</fullName>
        <shortName>AtC3H54</shortName>
    </recommendedName>
    <alternativeName>
        <fullName evidence="5">Tandem CCCH Zinc Finger protein 6</fullName>
        <shortName evidence="5">AtTZF6</shortName>
    </alternativeName>
</protein>
<name>C3H54_ARATH</name>
<accession>O65036</accession>
<accession>A0MFE4</accession>
<proteinExistence type="evidence at protein level"/>
<dbReference type="EMBL" id="AF050463">
    <property type="protein sequence ID" value="AAC05744.1"/>
    <property type="molecule type" value="mRNA"/>
</dbReference>
<dbReference type="EMBL" id="AL163912">
    <property type="protein sequence ID" value="CAB87939.1"/>
    <property type="molecule type" value="Genomic_DNA"/>
</dbReference>
<dbReference type="EMBL" id="CP002688">
    <property type="protein sequence ID" value="AED91166.1"/>
    <property type="molecule type" value="Genomic_DNA"/>
</dbReference>
<dbReference type="EMBL" id="DQ446927">
    <property type="protein sequence ID" value="ABE66138.1"/>
    <property type="molecule type" value="mRNA"/>
</dbReference>
<dbReference type="EMBL" id="DQ653270">
    <property type="protein sequence ID" value="ABK28686.1"/>
    <property type="status" value="ALT_SEQ"/>
    <property type="molecule type" value="mRNA"/>
</dbReference>
<dbReference type="PIR" id="T49889">
    <property type="entry name" value="T49889"/>
</dbReference>
<dbReference type="RefSeq" id="NP_196367.1">
    <property type="nucleotide sequence ID" value="NM_120832.2"/>
</dbReference>
<dbReference type="BioGRID" id="15921">
    <property type="interactions" value="1"/>
</dbReference>
<dbReference type="FunCoup" id="O65036">
    <property type="interactions" value="5"/>
</dbReference>
<dbReference type="STRING" id="3702.O65036"/>
<dbReference type="PaxDb" id="3702-AT5G07500.1"/>
<dbReference type="ProteomicsDB" id="240519"/>
<dbReference type="EnsemblPlants" id="AT5G07500.1">
    <property type="protein sequence ID" value="AT5G07500.1"/>
    <property type="gene ID" value="AT5G07500"/>
</dbReference>
<dbReference type="GeneID" id="830642"/>
<dbReference type="Gramene" id="AT5G07500.1">
    <property type="protein sequence ID" value="AT5G07500.1"/>
    <property type="gene ID" value="AT5G07500"/>
</dbReference>
<dbReference type="KEGG" id="ath:AT5G07500"/>
<dbReference type="Araport" id="AT5G07500"/>
<dbReference type="TAIR" id="AT5G07500">
    <property type="gene designation" value="PEI1"/>
</dbReference>
<dbReference type="eggNOG" id="KOG1595">
    <property type="taxonomic scope" value="Eukaryota"/>
</dbReference>
<dbReference type="HOGENOM" id="CLU_044407_1_1_1"/>
<dbReference type="InParanoid" id="O65036"/>
<dbReference type="OMA" id="RRYTYCA"/>
<dbReference type="OrthoDB" id="410307at2759"/>
<dbReference type="PhylomeDB" id="O65036"/>
<dbReference type="PRO" id="PR:O65036"/>
<dbReference type="Proteomes" id="UP000006548">
    <property type="component" value="Chromosome 5"/>
</dbReference>
<dbReference type="ExpressionAtlas" id="O65036">
    <property type="expression patterns" value="baseline and differential"/>
</dbReference>
<dbReference type="GO" id="GO:0005634">
    <property type="term" value="C:nucleus"/>
    <property type="evidence" value="ECO:0007669"/>
    <property type="project" value="UniProtKB-SubCell"/>
</dbReference>
<dbReference type="GO" id="GO:0003677">
    <property type="term" value="F:DNA binding"/>
    <property type="evidence" value="ECO:0007669"/>
    <property type="project" value="UniProtKB-KW"/>
</dbReference>
<dbReference type="GO" id="GO:0003700">
    <property type="term" value="F:DNA-binding transcription factor activity"/>
    <property type="evidence" value="ECO:0000250"/>
    <property type="project" value="TAIR"/>
</dbReference>
<dbReference type="GO" id="GO:0008270">
    <property type="term" value="F:zinc ion binding"/>
    <property type="evidence" value="ECO:0007669"/>
    <property type="project" value="UniProtKB-KW"/>
</dbReference>
<dbReference type="GO" id="GO:0030154">
    <property type="term" value="P:cell differentiation"/>
    <property type="evidence" value="ECO:0007669"/>
    <property type="project" value="UniProtKB-KW"/>
</dbReference>
<dbReference type="GO" id="GO:0009793">
    <property type="term" value="P:embryo development ending in seed dormancy"/>
    <property type="evidence" value="ECO:0000315"/>
    <property type="project" value="TAIR"/>
</dbReference>
<dbReference type="Gene3D" id="3.30.1370.210">
    <property type="match status" value="1"/>
</dbReference>
<dbReference type="InterPro" id="IPR045234">
    <property type="entry name" value="Unkempt-like"/>
</dbReference>
<dbReference type="InterPro" id="IPR000571">
    <property type="entry name" value="Znf_CCCH"/>
</dbReference>
<dbReference type="PANTHER" id="PTHR14493">
    <property type="entry name" value="UNKEMPT FAMILY MEMBER"/>
    <property type="match status" value="1"/>
</dbReference>
<dbReference type="PANTHER" id="PTHR14493:SF109">
    <property type="entry name" value="ZINC FINGER CCCH DOMAIN-CONTAINING PROTEIN 54"/>
    <property type="match status" value="1"/>
</dbReference>
<dbReference type="Pfam" id="PF00642">
    <property type="entry name" value="zf-CCCH"/>
    <property type="match status" value="1"/>
</dbReference>
<dbReference type="Pfam" id="PF25512">
    <property type="entry name" value="zf-CCCH_AtC3H23"/>
    <property type="match status" value="1"/>
</dbReference>
<dbReference type="SMART" id="SM00356">
    <property type="entry name" value="ZnF_C3H1"/>
    <property type="match status" value="2"/>
</dbReference>
<dbReference type="PROSITE" id="PS50103">
    <property type="entry name" value="ZF_C3H1"/>
    <property type="match status" value="1"/>
</dbReference>
<keyword id="KW-0221">Differentiation</keyword>
<keyword id="KW-0238">DNA-binding</keyword>
<keyword id="KW-0479">Metal-binding</keyword>
<keyword id="KW-0539">Nucleus</keyword>
<keyword id="KW-1185">Reference proteome</keyword>
<keyword id="KW-0804">Transcription</keyword>
<keyword id="KW-0805">Transcription regulation</keyword>
<keyword id="KW-0862">Zinc</keyword>
<keyword id="KW-0863">Zinc-finger</keyword>
<feature type="chain" id="PRO_0000372007" description="Zinc finger CCCH domain-containing protein 54">
    <location>
        <begin position="1"/>
        <end position="245"/>
    </location>
</feature>
<feature type="zinc finger region" description="C3H1-type" evidence="1">
    <location>
        <begin position="92"/>
        <end position="119"/>
    </location>
</feature>
<feature type="region of interest" description="Disordered" evidence="2">
    <location>
        <begin position="175"/>
        <end position="204"/>
    </location>
</feature>